<comment type="function">
    <text evidence="1">Has an important function as a repair enzyme for proteins that have been inactivated by oxidation. Catalyzes the reversible oxidation-reduction of methionine sulfoxide in proteins to methionine.</text>
</comment>
<comment type="catalytic activity">
    <reaction evidence="1">
        <text>L-methionyl-[protein] + [thioredoxin]-disulfide + H2O = L-methionyl-(S)-S-oxide-[protein] + [thioredoxin]-dithiol</text>
        <dbReference type="Rhea" id="RHEA:14217"/>
        <dbReference type="Rhea" id="RHEA-COMP:10698"/>
        <dbReference type="Rhea" id="RHEA-COMP:10700"/>
        <dbReference type="Rhea" id="RHEA-COMP:12313"/>
        <dbReference type="Rhea" id="RHEA-COMP:12315"/>
        <dbReference type="ChEBI" id="CHEBI:15377"/>
        <dbReference type="ChEBI" id="CHEBI:16044"/>
        <dbReference type="ChEBI" id="CHEBI:29950"/>
        <dbReference type="ChEBI" id="CHEBI:44120"/>
        <dbReference type="ChEBI" id="CHEBI:50058"/>
        <dbReference type="EC" id="1.8.4.11"/>
    </reaction>
</comment>
<comment type="catalytic activity">
    <reaction evidence="1">
        <text>[thioredoxin]-disulfide + L-methionine + H2O = L-methionine (S)-S-oxide + [thioredoxin]-dithiol</text>
        <dbReference type="Rhea" id="RHEA:19993"/>
        <dbReference type="Rhea" id="RHEA-COMP:10698"/>
        <dbReference type="Rhea" id="RHEA-COMP:10700"/>
        <dbReference type="ChEBI" id="CHEBI:15377"/>
        <dbReference type="ChEBI" id="CHEBI:29950"/>
        <dbReference type="ChEBI" id="CHEBI:50058"/>
        <dbReference type="ChEBI" id="CHEBI:57844"/>
        <dbReference type="ChEBI" id="CHEBI:58772"/>
        <dbReference type="EC" id="1.8.4.11"/>
    </reaction>
</comment>
<comment type="similarity">
    <text evidence="1">Belongs to the MsrA Met sulfoxide reductase family.</text>
</comment>
<feature type="chain" id="PRO_0000138567" description="Peptide methionine sulfoxide reductase MsrA">
    <location>
        <begin position="1"/>
        <end position="209"/>
    </location>
</feature>
<feature type="region of interest" description="Disordered" evidence="2">
    <location>
        <begin position="183"/>
        <end position="209"/>
    </location>
</feature>
<feature type="compositionally biased region" description="Polar residues" evidence="2">
    <location>
        <begin position="199"/>
        <end position="209"/>
    </location>
</feature>
<feature type="active site" evidence="1">
    <location>
        <position position="14"/>
    </location>
</feature>
<reference key="1">
    <citation type="journal article" date="2001" name="J. Bacteriol.">
        <title>Structural and functional analysis of the phosphonoacetate hydrolase (phnA) gene region in Pseudomonas fluorescens 23F.</title>
        <authorList>
            <person name="Kulakova A.N."/>
            <person name="Kulakov L.A."/>
            <person name="Akulenko N.V."/>
            <person name="Ksenzenko V.N."/>
            <person name="Hamilton J.T.G."/>
            <person name="Quinn J.P."/>
        </authorList>
    </citation>
    <scope>NUCLEOTIDE SEQUENCE [GENOMIC DNA]</scope>
    <source>
        <strain>23F</strain>
    </source>
</reference>
<organism>
    <name type="scientific">Pseudomonas fluorescens</name>
    <dbReference type="NCBI Taxonomy" id="294"/>
    <lineage>
        <taxon>Bacteria</taxon>
        <taxon>Pseudomonadati</taxon>
        <taxon>Pseudomonadota</taxon>
        <taxon>Gammaproteobacteria</taxon>
        <taxon>Pseudomonadales</taxon>
        <taxon>Pseudomonadaceae</taxon>
        <taxon>Pseudomonas</taxon>
    </lineage>
</organism>
<proteinExistence type="inferred from homology"/>
<name>MSRA_PSEFL</name>
<evidence type="ECO:0000255" key="1">
    <source>
        <dbReference type="HAMAP-Rule" id="MF_01401"/>
    </source>
</evidence>
<evidence type="ECO:0000256" key="2">
    <source>
        <dbReference type="SAM" id="MobiDB-lite"/>
    </source>
</evidence>
<sequence>MTRHTETAILAGGCFWGMQDLLRRYPGVLHTRVGYTGGDVPNATYRNHGNHAEAIEIVFDPAVISYRQILEFFFQIHDPSTPNRQGNDLGPSYRSAIYYLNEQQRDIAEDTAADVDASHLWPGRVVTEIEPAGPFWEAEPEHQDYLERIPNGYTCHFIRRMEAPQARLKVEFVRRRGDRFRPFSALTTGGNQPGARGGLTNNTCQHPRH</sequence>
<protein>
    <recommendedName>
        <fullName evidence="1">Peptide methionine sulfoxide reductase MsrA</fullName>
        <shortName evidence="1">Protein-methionine-S-oxide reductase</shortName>
        <ecNumber evidence="1">1.8.4.11</ecNumber>
    </recommendedName>
    <alternativeName>
        <fullName evidence="1">Peptide-methionine (S)-S-oxide reductase</fullName>
        <shortName evidence="1">Peptide Met(O) reductase</shortName>
    </alternativeName>
</protein>
<accession>O69761</accession>
<dbReference type="EC" id="1.8.4.11" evidence="1"/>
<dbReference type="EMBL" id="L49465">
    <property type="protein sequence ID" value="AAC15512.1"/>
    <property type="molecule type" value="Genomic_DNA"/>
</dbReference>
<dbReference type="SMR" id="O69761"/>
<dbReference type="eggNOG" id="COG0225">
    <property type="taxonomic scope" value="Bacteria"/>
</dbReference>
<dbReference type="GO" id="GO:0033744">
    <property type="term" value="F:L-methionine:thioredoxin-disulfide S-oxidoreductase activity"/>
    <property type="evidence" value="ECO:0007669"/>
    <property type="project" value="RHEA"/>
</dbReference>
<dbReference type="GO" id="GO:0008113">
    <property type="term" value="F:peptide-methionine (S)-S-oxide reductase activity"/>
    <property type="evidence" value="ECO:0007669"/>
    <property type="project" value="UniProtKB-UniRule"/>
</dbReference>
<dbReference type="GO" id="GO:0036211">
    <property type="term" value="P:protein modification process"/>
    <property type="evidence" value="ECO:0007669"/>
    <property type="project" value="UniProtKB-UniRule"/>
</dbReference>
<dbReference type="FunFam" id="3.30.1060.10:FF:000005">
    <property type="entry name" value="Peptide methionine sulfoxide reductase MsrA"/>
    <property type="match status" value="1"/>
</dbReference>
<dbReference type="Gene3D" id="3.30.1060.10">
    <property type="entry name" value="Peptide methionine sulphoxide reductase MsrA"/>
    <property type="match status" value="1"/>
</dbReference>
<dbReference type="HAMAP" id="MF_01401">
    <property type="entry name" value="MsrA"/>
    <property type="match status" value="1"/>
</dbReference>
<dbReference type="InterPro" id="IPR002569">
    <property type="entry name" value="Met_Sox_Rdtase_MsrA_dom"/>
</dbReference>
<dbReference type="InterPro" id="IPR036509">
    <property type="entry name" value="Met_Sox_Rdtase_MsrA_sf"/>
</dbReference>
<dbReference type="NCBIfam" id="TIGR00401">
    <property type="entry name" value="msrA"/>
    <property type="match status" value="1"/>
</dbReference>
<dbReference type="PANTHER" id="PTHR43774">
    <property type="entry name" value="PEPTIDE METHIONINE SULFOXIDE REDUCTASE"/>
    <property type="match status" value="1"/>
</dbReference>
<dbReference type="PANTHER" id="PTHR43774:SF1">
    <property type="entry name" value="PEPTIDE METHIONINE SULFOXIDE REDUCTASE MSRA 2"/>
    <property type="match status" value="1"/>
</dbReference>
<dbReference type="Pfam" id="PF01625">
    <property type="entry name" value="PMSR"/>
    <property type="match status" value="1"/>
</dbReference>
<dbReference type="SUPFAM" id="SSF55068">
    <property type="entry name" value="Peptide methionine sulfoxide reductase"/>
    <property type="match status" value="1"/>
</dbReference>
<gene>
    <name evidence="1" type="primary">msrA</name>
</gene>
<keyword id="KW-0560">Oxidoreductase</keyword>